<comment type="function">
    <text evidence="1 2 4">Multifunctional protein with various roles in different cellular compartments. May act in a redox sensitive manner. Associates with chromatin and binds DNA with a preference for non-canonical DNA structures such as single-stranded DNA. Can bend DNA and enhance DNA flexibility by looping thus providing a mechanism to promote activities on various gene promoters. Proposed to be involved in the innate immune response to nucleic acids by acting as a cytoplasmic promiscuous immunogenic DNA/RNA sensor. Negatively regulates B-cell and myeloid cell differentiation. In hematopoietic stem cells may regulate the balance between self-renewal and differentiation. Involved in negative regulation of canonical Wnt signaling (By similarity).</text>
</comment>
<comment type="subcellular location">
    <subcellularLocation>
        <location evidence="4 7">Nucleus</location>
    </subcellularLocation>
    <subcellularLocation>
        <location evidence="9">Chromosome</location>
    </subcellularLocation>
    <subcellularLocation>
        <location evidence="1">Cytoplasm</location>
    </subcellularLocation>
</comment>
<comment type="PTM">
    <text evidence="2">Reduction/oxidation of cysteine residues Cys-23, Cys-45 and Cys-104 and a possible intramolecular disulfide bond involving Cys-23 and Cys-45 give rise to different redox forms with specific functional activities in various cellular compartments: 1- fully reduced HMGB3 (HMGB3C23hC45hC104h), 2- disulfide HMGB3 (HMGB3C23-C45C104h) and 3- sulfonyl HMGB3 (HMGB3C23soC45soC104so).</text>
</comment>
<comment type="similarity">
    <text evidence="9">Belongs to the HMGB family.</text>
</comment>
<comment type="sequence caution" evidence="9">
    <conflict type="erroneous initiation">
        <sequence resource="EMBL-CDS" id="AAI09794"/>
    </conflict>
</comment>
<protein>
    <recommendedName>
        <fullName>High mobility group protein B3</fullName>
    </recommendedName>
</protein>
<accession>Q32L31</accession>
<evidence type="ECO:0000250" key="1">
    <source>
        <dbReference type="UniProtKB" id="O54879"/>
    </source>
</evidence>
<evidence type="ECO:0000250" key="2">
    <source>
        <dbReference type="UniProtKB" id="P09429"/>
    </source>
</evidence>
<evidence type="ECO:0000250" key="3">
    <source>
        <dbReference type="UniProtKB" id="P30681"/>
    </source>
</evidence>
<evidence type="ECO:0000250" key="4">
    <source>
        <dbReference type="UniProtKB" id="P40618"/>
    </source>
</evidence>
<evidence type="ECO:0000250" key="5">
    <source>
        <dbReference type="UniProtKB" id="P63158"/>
    </source>
</evidence>
<evidence type="ECO:0000250" key="6">
    <source>
        <dbReference type="UniProtKB" id="P63159"/>
    </source>
</evidence>
<evidence type="ECO:0000255" key="7">
    <source>
        <dbReference type="PROSITE-ProRule" id="PRU00267"/>
    </source>
</evidence>
<evidence type="ECO:0000256" key="8">
    <source>
        <dbReference type="SAM" id="MobiDB-lite"/>
    </source>
</evidence>
<evidence type="ECO:0000305" key="9"/>
<organism>
    <name type="scientific">Bos taurus</name>
    <name type="common">Bovine</name>
    <dbReference type="NCBI Taxonomy" id="9913"/>
    <lineage>
        <taxon>Eukaryota</taxon>
        <taxon>Metazoa</taxon>
        <taxon>Chordata</taxon>
        <taxon>Craniata</taxon>
        <taxon>Vertebrata</taxon>
        <taxon>Euteleostomi</taxon>
        <taxon>Mammalia</taxon>
        <taxon>Eutheria</taxon>
        <taxon>Laurasiatheria</taxon>
        <taxon>Artiodactyla</taxon>
        <taxon>Ruminantia</taxon>
        <taxon>Pecora</taxon>
        <taxon>Bovidae</taxon>
        <taxon>Bovinae</taxon>
        <taxon>Bos</taxon>
    </lineage>
</organism>
<dbReference type="EMBL" id="BC109793">
    <property type="protein sequence ID" value="AAI09794.1"/>
    <property type="status" value="ALT_INIT"/>
    <property type="molecule type" value="mRNA"/>
</dbReference>
<dbReference type="RefSeq" id="NP_001069753.2">
    <property type="nucleotide sequence ID" value="NM_001076285.2"/>
</dbReference>
<dbReference type="RefSeq" id="NP_001106728.1">
    <property type="nucleotide sequence ID" value="NM_001113257.2"/>
</dbReference>
<dbReference type="RefSeq" id="XP_024843975.1">
    <property type="nucleotide sequence ID" value="XM_024988207.2"/>
</dbReference>
<dbReference type="RefSeq" id="XP_059739507.1">
    <property type="nucleotide sequence ID" value="XM_059883524.1"/>
</dbReference>
<dbReference type="SMR" id="Q32L31"/>
<dbReference type="FunCoup" id="Q32L31">
    <property type="interactions" value="998"/>
</dbReference>
<dbReference type="STRING" id="9913.ENSBTAP00000006785"/>
<dbReference type="PaxDb" id="9913-ENSBTAP00000006785"/>
<dbReference type="PeptideAtlas" id="Q32L31"/>
<dbReference type="GeneID" id="613729"/>
<dbReference type="KEGG" id="bta:613729"/>
<dbReference type="CTD" id="3149"/>
<dbReference type="eggNOG" id="KOG0381">
    <property type="taxonomic scope" value="Eukaryota"/>
</dbReference>
<dbReference type="HOGENOM" id="CLU_082854_0_0_1"/>
<dbReference type="InParanoid" id="Q32L31"/>
<dbReference type="OrthoDB" id="1919336at2759"/>
<dbReference type="TreeFam" id="TF105371"/>
<dbReference type="Proteomes" id="UP000009136">
    <property type="component" value="Unplaced"/>
</dbReference>
<dbReference type="GO" id="GO:0005694">
    <property type="term" value="C:chromosome"/>
    <property type="evidence" value="ECO:0007669"/>
    <property type="project" value="UniProtKB-SubCell"/>
</dbReference>
<dbReference type="GO" id="GO:0005737">
    <property type="term" value="C:cytoplasm"/>
    <property type="evidence" value="ECO:0007669"/>
    <property type="project" value="UniProtKB-SubCell"/>
</dbReference>
<dbReference type="GO" id="GO:0005634">
    <property type="term" value="C:nucleus"/>
    <property type="evidence" value="ECO:0007669"/>
    <property type="project" value="UniProtKB-SubCell"/>
</dbReference>
<dbReference type="GO" id="GO:0008301">
    <property type="term" value="F:DNA binding, bending"/>
    <property type="evidence" value="ECO:0000314"/>
    <property type="project" value="UniProtKB"/>
</dbReference>
<dbReference type="GO" id="GO:0003690">
    <property type="term" value="F:double-stranded DNA binding"/>
    <property type="evidence" value="ECO:0000314"/>
    <property type="project" value="UniProtKB"/>
</dbReference>
<dbReference type="GO" id="GO:0000400">
    <property type="term" value="F:four-way junction DNA binding"/>
    <property type="evidence" value="ECO:0000250"/>
    <property type="project" value="AgBase"/>
</dbReference>
<dbReference type="GO" id="GO:0032392">
    <property type="term" value="P:DNA geometric change"/>
    <property type="evidence" value="ECO:0000250"/>
    <property type="project" value="AgBase"/>
</dbReference>
<dbReference type="GO" id="GO:0006310">
    <property type="term" value="P:DNA recombination"/>
    <property type="evidence" value="ECO:0000314"/>
    <property type="project" value="UniProtKB"/>
</dbReference>
<dbReference type="GO" id="GO:0045087">
    <property type="term" value="P:innate immune response"/>
    <property type="evidence" value="ECO:0007669"/>
    <property type="project" value="UniProtKB-KW"/>
</dbReference>
<dbReference type="CDD" id="cd21978">
    <property type="entry name" value="HMG-box_HMGB_rpt1"/>
    <property type="match status" value="1"/>
</dbReference>
<dbReference type="CDD" id="cd21979">
    <property type="entry name" value="HMG-box_HMGB_rpt2"/>
    <property type="match status" value="1"/>
</dbReference>
<dbReference type="FunFam" id="1.10.30.10:FF:000013">
    <property type="entry name" value="High mobility group protein B3"/>
    <property type="match status" value="1"/>
</dbReference>
<dbReference type="FunFam" id="1.10.30.10:FF:000017">
    <property type="entry name" value="high mobility group protein B3"/>
    <property type="match status" value="1"/>
</dbReference>
<dbReference type="Gene3D" id="1.10.30.10">
    <property type="entry name" value="High mobility group box domain"/>
    <property type="match status" value="2"/>
</dbReference>
<dbReference type="InterPro" id="IPR009071">
    <property type="entry name" value="HMG_box_dom"/>
</dbReference>
<dbReference type="InterPro" id="IPR036910">
    <property type="entry name" value="HMG_box_dom_sf"/>
</dbReference>
<dbReference type="InterPro" id="IPR017967">
    <property type="entry name" value="HMG_boxA_CS"/>
</dbReference>
<dbReference type="InterPro" id="IPR050342">
    <property type="entry name" value="HMGB"/>
</dbReference>
<dbReference type="PANTHER" id="PTHR48112:SF32">
    <property type="entry name" value="HIGH MOBILITY GROUP PROTEIN B3"/>
    <property type="match status" value="1"/>
</dbReference>
<dbReference type="PANTHER" id="PTHR48112">
    <property type="entry name" value="HIGH MOBILITY GROUP PROTEIN DSP1"/>
    <property type="match status" value="1"/>
</dbReference>
<dbReference type="Pfam" id="PF00505">
    <property type="entry name" value="HMG_box"/>
    <property type="match status" value="1"/>
</dbReference>
<dbReference type="Pfam" id="PF09011">
    <property type="entry name" value="HMG_box_2"/>
    <property type="match status" value="1"/>
</dbReference>
<dbReference type="PRINTS" id="PR00886">
    <property type="entry name" value="HIGHMOBLTY12"/>
</dbReference>
<dbReference type="SMART" id="SM00398">
    <property type="entry name" value="HMG"/>
    <property type="match status" value="2"/>
</dbReference>
<dbReference type="SUPFAM" id="SSF47095">
    <property type="entry name" value="HMG-box"/>
    <property type="match status" value="2"/>
</dbReference>
<dbReference type="PROSITE" id="PS00353">
    <property type="entry name" value="HMG_BOX_1"/>
    <property type="match status" value="1"/>
</dbReference>
<dbReference type="PROSITE" id="PS50118">
    <property type="entry name" value="HMG_BOX_2"/>
    <property type="match status" value="2"/>
</dbReference>
<name>HMGB3_BOVIN</name>
<keyword id="KW-0007">Acetylation</keyword>
<keyword id="KW-0158">Chromosome</keyword>
<keyword id="KW-0963">Cytoplasm</keyword>
<keyword id="KW-1015">Disulfide bond</keyword>
<keyword id="KW-0238">DNA-binding</keyword>
<keyword id="KW-0391">Immunity</keyword>
<keyword id="KW-0399">Innate immunity</keyword>
<keyword id="KW-0539">Nucleus</keyword>
<keyword id="KW-0558">Oxidation</keyword>
<keyword id="KW-0597">Phosphoprotein</keyword>
<keyword id="KW-1185">Reference proteome</keyword>
<keyword id="KW-0677">Repeat</keyword>
<keyword id="KW-0804">Transcription</keyword>
<keyword id="KW-0805">Transcription regulation</keyword>
<feature type="chain" id="PRO_0000286355" description="High mobility group protein B3">
    <location>
        <begin position="1"/>
        <end position="200"/>
    </location>
</feature>
<feature type="DNA-binding region" description="HMG box 1" evidence="7">
    <location>
        <begin position="9"/>
        <end position="79"/>
    </location>
</feature>
<feature type="DNA-binding region" description="HMG box 2" evidence="7">
    <location>
        <begin position="93"/>
        <end position="161"/>
    </location>
</feature>
<feature type="region of interest" description="Disordered" evidence="8">
    <location>
        <begin position="71"/>
        <end position="97"/>
    </location>
</feature>
<feature type="region of interest" description="Disordered" evidence="8">
    <location>
        <begin position="163"/>
        <end position="200"/>
    </location>
</feature>
<feature type="compositionally biased region" description="Acidic residues" evidence="8">
    <location>
        <begin position="182"/>
        <end position="200"/>
    </location>
</feature>
<feature type="modified residue" description="N6-acetyllysine" evidence="6">
    <location>
        <position position="3"/>
    </location>
</feature>
<feature type="modified residue" description="Cysteine sulfonic acid (-SO3H); alternate" evidence="6">
    <location>
        <position position="23"/>
    </location>
</feature>
<feature type="modified residue" description="N6-acetyllysine" evidence="2">
    <location>
        <position position="30"/>
    </location>
</feature>
<feature type="modified residue" description="N6-acetyllysine" evidence="5">
    <location>
        <position position="43"/>
    </location>
</feature>
<feature type="modified residue" description="Cysteine sulfonic acid (-SO3H); alternate" evidence="6">
    <location>
        <position position="45"/>
    </location>
</feature>
<feature type="modified residue" description="Phosphoserine" evidence="2">
    <location>
        <position position="98"/>
    </location>
</feature>
<feature type="modified residue" description="Cysteine sulfonic acid (-SO3H)" evidence="6">
    <location>
        <position position="104"/>
    </location>
</feature>
<feature type="modified residue" description="N6-acetyllysine" evidence="3">
    <location>
        <position position="112"/>
    </location>
</feature>
<feature type="modified residue" description="N6-acetyllysine" evidence="5">
    <location>
        <position position="139"/>
    </location>
</feature>
<feature type="disulfide bond" description="In disulfide HMGB3; alternate" evidence="6">
    <location>
        <begin position="23"/>
        <end position="45"/>
    </location>
</feature>
<gene>
    <name type="primary">HMGB3</name>
</gene>
<sequence>MAKGDPKKPKGKMSAYAFFVQTCREEHKKKNPEVPVNFAEFSKKCSERWKTMSGKEKSKFDEMAKADKVRYDREMKDYGPAKGGKKKKDPNAPKRPPSGFFLFCSEFRPKIKSANPGISIGDVAKKLGEMWNNLSDSEKQPYINKAAKLKEKYEKDVADYKSKGKFDGAKGAAKVARKKVEEEDEEDEEEEEEEEEEEDE</sequence>
<reference key="1">
    <citation type="submission" date="2005-11" db="EMBL/GenBank/DDBJ databases">
        <authorList>
            <consortium name="NIH - Mammalian Gene Collection (MGC) project"/>
        </authorList>
    </citation>
    <scope>NUCLEOTIDE SEQUENCE [LARGE SCALE MRNA]</scope>
    <source>
        <strain>Crossbred X Angus</strain>
        <tissue>Liver</tissue>
    </source>
</reference>
<proteinExistence type="evidence at transcript level"/>